<feature type="chain" id="PRO_0000081319" description="Glycerol metabolism operon regulatory protein">
    <location>
        <begin position="1"/>
        <end position="641"/>
    </location>
</feature>
<feature type="domain" description="GAF" evidence="1">
    <location>
        <begin position="52"/>
        <end position="189"/>
    </location>
</feature>
<feature type="domain" description="PAS" evidence="1">
    <location>
        <begin position="203"/>
        <end position="265"/>
    </location>
</feature>
<feature type="domain" description="Sigma-54 factor interaction" evidence="2">
    <location>
        <begin position="327"/>
        <end position="552"/>
    </location>
</feature>
<feature type="region of interest" description="Sensor domain" evidence="1">
    <location>
        <begin position="1"/>
        <end position="318"/>
    </location>
</feature>
<feature type="binding site" evidence="2">
    <location>
        <begin position="355"/>
        <end position="362"/>
    </location>
    <ligand>
        <name>ATP</name>
        <dbReference type="ChEBI" id="CHEBI:30616"/>
    </ligand>
</feature>
<feature type="binding site" evidence="2">
    <location>
        <begin position="415"/>
        <end position="424"/>
    </location>
    <ligand>
        <name>ATP</name>
        <dbReference type="ChEBI" id="CHEBI:30616"/>
    </ligand>
</feature>
<sequence length="641" mass="71436">MTTHTQDIGKEVSSVIAQSWHRCSKFMQRETWQAPHQAQGLTFESICRRKTALLTIAQAALEDAWEFMDGRPCALLILDESACILSRCGDPQTVEQLAELGFRDGSYCAESIIGSCALSLATMPGQPTKTSGDQHFKQALHPWSFCSTPVFDNHGRLFGSISLCCLVEHECVSDLSLTLAIAREVGNSLLTDSLLAESNRHLNQMYGLLESMDDGVMAWNEQGVLQFLNARAALLLHLDAQASQGKNINDLLNLPMLLRRAIKHARGLNHVEVTFESQHQFVDAVITLKPIVEEQGNSFILLLHPVEQMRQLMTSQLGKVSHTFEQMSTDDPETRRLIHFGRQAARGSFPILLCGEEGVGKELLSQAIHNESERASGPYIAVNCQLYANSVLGQDFMGSAPTDDENGRLSRLELANGGTLFLEKIEYLAPELQSALLQVIKQGVLTRLDARRLIPVDVKVIATTTVDLANLVEQNRFSRQLYYALHSFEIVIPPLRARRNSIPSLIYTRLNSLKKRFSSSLKIDDDALAQLVAYSWPGNDFELNSIIENIAISSDNGHIRLSNLPDYLFAERPGLETASSLLPASLTFTAIEKEAIIHAARVTSGRVQEMSQLLNIGRTTLWRKMKQYDIDASQFKRKHLE</sequence>
<accession>P45512</accession>
<protein>
    <recommendedName>
        <fullName evidence="4">Glycerol metabolism operon regulatory protein</fullName>
    </recommendedName>
</protein>
<proteinExistence type="predicted"/>
<gene>
    <name evidence="4" type="primary">dhaR</name>
</gene>
<dbReference type="EMBL" id="U09771">
    <property type="protein sequence ID" value="AAB48845.1"/>
    <property type="molecule type" value="Genomic_DNA"/>
</dbReference>
<dbReference type="SMR" id="P45512"/>
<dbReference type="STRING" id="1333848.CFNIH1_02635"/>
<dbReference type="GO" id="GO:0005524">
    <property type="term" value="F:ATP binding"/>
    <property type="evidence" value="ECO:0007669"/>
    <property type="project" value="UniProtKB-KW"/>
</dbReference>
<dbReference type="GO" id="GO:0016887">
    <property type="term" value="F:ATP hydrolysis activity"/>
    <property type="evidence" value="ECO:0007669"/>
    <property type="project" value="InterPro"/>
</dbReference>
<dbReference type="GO" id="GO:0043565">
    <property type="term" value="F:sequence-specific DNA binding"/>
    <property type="evidence" value="ECO:0007669"/>
    <property type="project" value="InterPro"/>
</dbReference>
<dbReference type="GO" id="GO:0006071">
    <property type="term" value="P:glycerol metabolic process"/>
    <property type="evidence" value="ECO:0007669"/>
    <property type="project" value="UniProtKB-KW"/>
</dbReference>
<dbReference type="GO" id="GO:0006355">
    <property type="term" value="P:regulation of DNA-templated transcription"/>
    <property type="evidence" value="ECO:0007669"/>
    <property type="project" value="InterPro"/>
</dbReference>
<dbReference type="CDD" id="cd00009">
    <property type="entry name" value="AAA"/>
    <property type="match status" value="1"/>
</dbReference>
<dbReference type="CDD" id="cd00130">
    <property type="entry name" value="PAS"/>
    <property type="match status" value="1"/>
</dbReference>
<dbReference type="Gene3D" id="1.10.8.60">
    <property type="match status" value="1"/>
</dbReference>
<dbReference type="Gene3D" id="3.30.450.40">
    <property type="match status" value="1"/>
</dbReference>
<dbReference type="Gene3D" id="1.10.10.60">
    <property type="entry name" value="Homeodomain-like"/>
    <property type="match status" value="1"/>
</dbReference>
<dbReference type="Gene3D" id="3.40.50.300">
    <property type="entry name" value="P-loop containing nucleotide triphosphate hydrolases"/>
    <property type="match status" value="1"/>
</dbReference>
<dbReference type="Gene3D" id="3.30.450.20">
    <property type="entry name" value="PAS domain"/>
    <property type="match status" value="1"/>
</dbReference>
<dbReference type="InterPro" id="IPR003593">
    <property type="entry name" value="AAA+_ATPase"/>
</dbReference>
<dbReference type="InterPro" id="IPR003018">
    <property type="entry name" value="GAF"/>
</dbReference>
<dbReference type="InterPro" id="IPR029016">
    <property type="entry name" value="GAF-like_dom_sf"/>
</dbReference>
<dbReference type="InterPro" id="IPR009057">
    <property type="entry name" value="Homeodomain-like_sf"/>
</dbReference>
<dbReference type="InterPro" id="IPR002197">
    <property type="entry name" value="HTH_Fis"/>
</dbReference>
<dbReference type="InterPro" id="IPR027417">
    <property type="entry name" value="P-loop_NTPase"/>
</dbReference>
<dbReference type="InterPro" id="IPR000014">
    <property type="entry name" value="PAS"/>
</dbReference>
<dbReference type="InterPro" id="IPR035965">
    <property type="entry name" value="PAS-like_dom_sf"/>
</dbReference>
<dbReference type="InterPro" id="IPR013767">
    <property type="entry name" value="PAS_fold"/>
</dbReference>
<dbReference type="InterPro" id="IPR002078">
    <property type="entry name" value="Sigma_54_int"/>
</dbReference>
<dbReference type="InterPro" id="IPR025662">
    <property type="entry name" value="Sigma_54_int_dom_ATP-bd_1"/>
</dbReference>
<dbReference type="InterPro" id="IPR025943">
    <property type="entry name" value="Sigma_54_int_dom_ATP-bd_2"/>
</dbReference>
<dbReference type="NCBIfam" id="NF008485">
    <property type="entry name" value="PRK11388.1"/>
    <property type="match status" value="1"/>
</dbReference>
<dbReference type="PANTHER" id="PTHR32071:SF117">
    <property type="entry name" value="PTS-DEPENDENT DIHYDROXYACETONE KINASE OPERON REGULATORY PROTEIN-RELATED"/>
    <property type="match status" value="1"/>
</dbReference>
<dbReference type="PANTHER" id="PTHR32071">
    <property type="entry name" value="TRANSCRIPTIONAL REGULATORY PROTEIN"/>
    <property type="match status" value="1"/>
</dbReference>
<dbReference type="Pfam" id="PF01590">
    <property type="entry name" value="GAF"/>
    <property type="match status" value="1"/>
</dbReference>
<dbReference type="Pfam" id="PF02954">
    <property type="entry name" value="HTH_8"/>
    <property type="match status" value="1"/>
</dbReference>
<dbReference type="Pfam" id="PF00989">
    <property type="entry name" value="PAS"/>
    <property type="match status" value="1"/>
</dbReference>
<dbReference type="Pfam" id="PF00158">
    <property type="entry name" value="Sigma54_activat"/>
    <property type="match status" value="1"/>
</dbReference>
<dbReference type="SMART" id="SM00382">
    <property type="entry name" value="AAA"/>
    <property type="match status" value="1"/>
</dbReference>
<dbReference type="SMART" id="SM00091">
    <property type="entry name" value="PAS"/>
    <property type="match status" value="1"/>
</dbReference>
<dbReference type="SUPFAM" id="SSF46689">
    <property type="entry name" value="Homeodomain-like"/>
    <property type="match status" value="1"/>
</dbReference>
<dbReference type="SUPFAM" id="SSF52540">
    <property type="entry name" value="P-loop containing nucleoside triphosphate hydrolases"/>
    <property type="match status" value="1"/>
</dbReference>
<dbReference type="SUPFAM" id="SSF55785">
    <property type="entry name" value="PYP-like sensor domain (PAS domain)"/>
    <property type="match status" value="1"/>
</dbReference>
<dbReference type="PROSITE" id="PS00675">
    <property type="entry name" value="SIGMA54_INTERACT_1"/>
    <property type="match status" value="1"/>
</dbReference>
<dbReference type="PROSITE" id="PS00676">
    <property type="entry name" value="SIGMA54_INTERACT_2"/>
    <property type="match status" value="1"/>
</dbReference>
<dbReference type="PROSITE" id="PS50045">
    <property type="entry name" value="SIGMA54_INTERACT_4"/>
    <property type="match status" value="1"/>
</dbReference>
<organism>
    <name type="scientific">Citrobacter freundii</name>
    <dbReference type="NCBI Taxonomy" id="546"/>
    <lineage>
        <taxon>Bacteria</taxon>
        <taxon>Pseudomonadati</taxon>
        <taxon>Pseudomonadota</taxon>
        <taxon>Gammaproteobacteria</taxon>
        <taxon>Enterobacterales</taxon>
        <taxon>Enterobacteriaceae</taxon>
        <taxon>Citrobacter</taxon>
        <taxon>Citrobacter freundii complex</taxon>
    </lineage>
</organism>
<name>DHAR_CITFR</name>
<comment type="function">
    <text evidence="3">Transcriptional activator of the glycerol utilization dha operon.</text>
</comment>
<evidence type="ECO:0000250" key="1">
    <source>
        <dbReference type="UniProtKB" id="P76016"/>
    </source>
</evidence>
<evidence type="ECO:0000255" key="2">
    <source>
        <dbReference type="PROSITE-ProRule" id="PRU00193"/>
    </source>
</evidence>
<evidence type="ECO:0000269" key="3">
    <source>
    </source>
</evidence>
<evidence type="ECO:0000303" key="4">
    <source>
    </source>
</evidence>
<keyword id="KW-0010">Activator</keyword>
<keyword id="KW-0067">ATP-binding</keyword>
<keyword id="KW-0238">DNA-binding</keyword>
<keyword id="KW-0319">Glycerol metabolism</keyword>
<keyword id="KW-0547">Nucleotide-binding</keyword>
<keyword id="KW-0804">Transcription</keyword>
<keyword id="KW-0805">Transcription regulation</keyword>
<reference key="1">
    <citation type="journal article" date="1995" name="J. Bacteriol.">
        <title>Biochemical and molecular characterization of the oxidative branch of glycerol utilization by Citrobacter freundii.</title>
        <authorList>
            <person name="Daniel R."/>
            <person name="Stuertz K."/>
            <person name="Gottschalk G."/>
        </authorList>
    </citation>
    <scope>NUCLEOTIDE SEQUENCE [GENOMIC DNA]</scope>
    <scope>FUNCTION</scope>
    <source>
        <strain>ATCC 6750 / DSM 30040 / NCIB 8173 / M8BK</strain>
    </source>
</reference>